<feature type="chain" id="PRO_1000206611" description="Cell division protein ZipA">
    <location>
        <begin position="1"/>
        <end position="287"/>
    </location>
</feature>
<feature type="topological domain" description="Periplasmic" evidence="1">
    <location>
        <position position="1"/>
    </location>
</feature>
<feature type="transmembrane region" description="Helical" evidence="1">
    <location>
        <begin position="2"/>
        <end position="22"/>
    </location>
</feature>
<feature type="topological domain" description="Cytoplasmic" evidence="1">
    <location>
        <begin position="23"/>
        <end position="287"/>
    </location>
</feature>
<feature type="region of interest" description="Disordered" evidence="2">
    <location>
        <begin position="70"/>
        <end position="143"/>
    </location>
</feature>
<comment type="function">
    <text evidence="1">Essential cell division protein that stabilizes the FtsZ protofilaments by cross-linking them and that serves as a cytoplasmic membrane anchor for the Z ring. Also required for the recruitment to the septal ring of downstream cell division proteins.</text>
</comment>
<comment type="subunit">
    <text evidence="1">Interacts with FtsZ via their C-terminal domains.</text>
</comment>
<comment type="subcellular location">
    <subcellularLocation>
        <location evidence="1">Cell inner membrane</location>
        <topology evidence="1">Single-pass type I membrane protein</topology>
    </subcellularLocation>
    <text evidence="1">Localizes to the Z ring in an FtsZ-dependent manner.</text>
</comment>
<comment type="similarity">
    <text evidence="1">Belongs to the ZipA family.</text>
</comment>
<accession>C3JYN4</accession>
<keyword id="KW-0131">Cell cycle</keyword>
<keyword id="KW-0132">Cell division</keyword>
<keyword id="KW-0997">Cell inner membrane</keyword>
<keyword id="KW-1003">Cell membrane</keyword>
<keyword id="KW-0472">Membrane</keyword>
<keyword id="KW-0812">Transmembrane</keyword>
<keyword id="KW-1133">Transmembrane helix</keyword>
<proteinExistence type="inferred from homology"/>
<gene>
    <name evidence="1" type="primary">zipA</name>
    <name type="ordered locus">PFLU_4589</name>
</gene>
<name>ZIPA_PSEFS</name>
<evidence type="ECO:0000255" key="1">
    <source>
        <dbReference type="HAMAP-Rule" id="MF_00509"/>
    </source>
</evidence>
<evidence type="ECO:0000256" key="2">
    <source>
        <dbReference type="SAM" id="MobiDB-lite"/>
    </source>
</evidence>
<dbReference type="EMBL" id="AM181176">
    <property type="protein sequence ID" value="CAY51327.1"/>
    <property type="molecule type" value="Genomic_DNA"/>
</dbReference>
<dbReference type="RefSeq" id="WP_015885325.1">
    <property type="nucleotide sequence ID" value="NC_012660.1"/>
</dbReference>
<dbReference type="SMR" id="C3JYN4"/>
<dbReference type="STRING" id="294.SRM1_01894"/>
<dbReference type="PATRIC" id="fig|216595.4.peg.4724"/>
<dbReference type="eggNOG" id="COG3115">
    <property type="taxonomic scope" value="Bacteria"/>
</dbReference>
<dbReference type="HOGENOM" id="CLU_030174_0_1_6"/>
<dbReference type="OrthoDB" id="7054914at2"/>
<dbReference type="GO" id="GO:0032153">
    <property type="term" value="C:cell division site"/>
    <property type="evidence" value="ECO:0007669"/>
    <property type="project" value="UniProtKB-UniRule"/>
</dbReference>
<dbReference type="GO" id="GO:0005886">
    <property type="term" value="C:plasma membrane"/>
    <property type="evidence" value="ECO:0007669"/>
    <property type="project" value="UniProtKB-SubCell"/>
</dbReference>
<dbReference type="GO" id="GO:0000917">
    <property type="term" value="P:division septum assembly"/>
    <property type="evidence" value="ECO:0007669"/>
    <property type="project" value="TreeGrafter"/>
</dbReference>
<dbReference type="GO" id="GO:0043093">
    <property type="term" value="P:FtsZ-dependent cytokinesis"/>
    <property type="evidence" value="ECO:0007669"/>
    <property type="project" value="UniProtKB-UniRule"/>
</dbReference>
<dbReference type="Gene3D" id="3.30.1400.10">
    <property type="entry name" value="ZipA, C-terminal FtsZ-binding domain"/>
    <property type="match status" value="1"/>
</dbReference>
<dbReference type="HAMAP" id="MF_00509">
    <property type="entry name" value="ZipA"/>
    <property type="match status" value="1"/>
</dbReference>
<dbReference type="InterPro" id="IPR011919">
    <property type="entry name" value="Cell_div_ZipA"/>
</dbReference>
<dbReference type="InterPro" id="IPR007449">
    <property type="entry name" value="ZipA_FtsZ-bd_C"/>
</dbReference>
<dbReference type="InterPro" id="IPR036765">
    <property type="entry name" value="ZipA_FtsZ-bd_C_sf"/>
</dbReference>
<dbReference type="NCBIfam" id="TIGR02205">
    <property type="entry name" value="septum_zipA"/>
    <property type="match status" value="1"/>
</dbReference>
<dbReference type="PANTHER" id="PTHR38685">
    <property type="entry name" value="CELL DIVISION PROTEIN ZIPA"/>
    <property type="match status" value="1"/>
</dbReference>
<dbReference type="PANTHER" id="PTHR38685:SF1">
    <property type="entry name" value="CELL DIVISION PROTEIN ZIPA"/>
    <property type="match status" value="1"/>
</dbReference>
<dbReference type="Pfam" id="PF04354">
    <property type="entry name" value="ZipA_C"/>
    <property type="match status" value="1"/>
</dbReference>
<dbReference type="SMART" id="SM00771">
    <property type="entry name" value="ZipA_C"/>
    <property type="match status" value="1"/>
</dbReference>
<dbReference type="SUPFAM" id="SSF64383">
    <property type="entry name" value="Cell-division protein ZipA, C-terminal domain"/>
    <property type="match status" value="1"/>
</dbReference>
<reference key="1">
    <citation type="journal article" date="2009" name="Genome Biol.">
        <title>Genomic and genetic analyses of diversity and plant interactions of Pseudomonas fluorescens.</title>
        <authorList>
            <person name="Silby M.W."/>
            <person name="Cerdeno-Tarraga A.M."/>
            <person name="Vernikos G.S."/>
            <person name="Giddens S.R."/>
            <person name="Jackson R.W."/>
            <person name="Preston G.M."/>
            <person name="Zhang X.-X."/>
            <person name="Moon C.D."/>
            <person name="Gehrig S.M."/>
            <person name="Godfrey S.A.C."/>
            <person name="Knight C.G."/>
            <person name="Malone J.G."/>
            <person name="Robinson Z."/>
            <person name="Spiers A.J."/>
            <person name="Harris S."/>
            <person name="Challis G.L."/>
            <person name="Yaxley A.M."/>
            <person name="Harris D."/>
            <person name="Seeger K."/>
            <person name="Murphy L."/>
            <person name="Rutter S."/>
            <person name="Squares R."/>
            <person name="Quail M.A."/>
            <person name="Saunders E."/>
            <person name="Mavromatis K."/>
            <person name="Brettin T.S."/>
            <person name="Bentley S.D."/>
            <person name="Hothersall J."/>
            <person name="Stephens E."/>
            <person name="Thomas C.M."/>
            <person name="Parkhill J."/>
            <person name="Levy S.B."/>
            <person name="Rainey P.B."/>
            <person name="Thomson N.R."/>
        </authorList>
    </citation>
    <scope>NUCLEOTIDE SEQUENCE [LARGE SCALE GENOMIC DNA]</scope>
    <source>
        <strain>SBW25</strain>
    </source>
</reference>
<organism>
    <name type="scientific">Pseudomonas fluorescens (strain SBW25)</name>
    <dbReference type="NCBI Taxonomy" id="216595"/>
    <lineage>
        <taxon>Bacteria</taxon>
        <taxon>Pseudomonadati</taxon>
        <taxon>Pseudomonadota</taxon>
        <taxon>Gammaproteobacteria</taxon>
        <taxon>Pseudomonadales</taxon>
        <taxon>Pseudomonadaceae</taxon>
        <taxon>Pseudomonas</taxon>
    </lineage>
</organism>
<protein>
    <recommendedName>
        <fullName evidence="1">Cell division protein ZipA</fullName>
    </recommendedName>
</protein>
<sequence>MEIGLREWLIVIGIIVIAGILFDGWRRMRGGKGKLKFRLDRNLSNLPDDDGSAELLGPPRVLDTHKEPQLDEHDLPSMSAPVREAREPSSKRGKRANAGVAEPHQGDLNLDVDEGPSFSSRDDDFPDENAGKNAPRQSVNDQPPAEEVLVISVICRDAAGFKGPALLQNILESGLRFGEMDIFHRHESMAGNGEVLFSMANAVKPGTFDLDDIDLFSTPAVSFFLGLPGPRHPKQAFDVMVAAARKLSQELNGELKDDQRSVLTAQTIEHYRQRIVEFERRALTQKR</sequence>